<comment type="induction">
    <text evidence="2 3">Transcriptionally regulated by YxdJ. Induced by the antibacterial protein LL-37, probably via YxdJ.</text>
</comment>
<gene>
    <name type="primary">yxeA</name>
    <name type="ordered locus">BSU39620</name>
    <name type="ORF">HS74A</name>
</gene>
<dbReference type="EMBL" id="D45912">
    <property type="protein sequence ID" value="BAA08317.1"/>
    <property type="molecule type" value="Genomic_DNA"/>
</dbReference>
<dbReference type="EMBL" id="AL009126">
    <property type="protein sequence ID" value="CAB15998.1"/>
    <property type="molecule type" value="Genomic_DNA"/>
</dbReference>
<dbReference type="PIR" id="C70074">
    <property type="entry name" value="C70074"/>
</dbReference>
<dbReference type="RefSeq" id="NP_391841.1">
    <property type="nucleotide sequence ID" value="NC_000964.3"/>
</dbReference>
<dbReference type="RefSeq" id="WP_003227084.1">
    <property type="nucleotide sequence ID" value="NZ_OZ025638.1"/>
</dbReference>
<dbReference type="PDB" id="3NPP">
    <property type="method" value="X-ray"/>
    <property type="resolution" value="2.15 A"/>
    <property type="chains" value="A/B=30-115"/>
</dbReference>
<dbReference type="PDBsum" id="3NPP"/>
<dbReference type="SMR" id="P54940"/>
<dbReference type="FunCoup" id="P54940">
    <property type="interactions" value="18"/>
</dbReference>
<dbReference type="STRING" id="224308.BSU39620"/>
<dbReference type="PaxDb" id="224308-BSU39620"/>
<dbReference type="DNASU" id="937612"/>
<dbReference type="EnsemblBacteria" id="CAB15998">
    <property type="protein sequence ID" value="CAB15998"/>
    <property type="gene ID" value="BSU_39620"/>
</dbReference>
<dbReference type="GeneID" id="937612"/>
<dbReference type="KEGG" id="bsu:BSU39620"/>
<dbReference type="PATRIC" id="fig|224308.179.peg.4287"/>
<dbReference type="eggNOG" id="COG5294">
    <property type="taxonomic scope" value="Bacteria"/>
</dbReference>
<dbReference type="InParanoid" id="P54940"/>
<dbReference type="OrthoDB" id="2622687at2"/>
<dbReference type="PhylomeDB" id="P54940"/>
<dbReference type="BioCyc" id="BSUB:BSU39620-MONOMER"/>
<dbReference type="EvolutionaryTrace" id="P54940"/>
<dbReference type="Proteomes" id="UP000001570">
    <property type="component" value="Chromosome"/>
</dbReference>
<dbReference type="Gene3D" id="2.40.50.480">
    <property type="match status" value="1"/>
</dbReference>
<dbReference type="InterPro" id="IPR006542">
    <property type="entry name" value="DUF1093"/>
</dbReference>
<dbReference type="InterPro" id="IPR036166">
    <property type="entry name" value="YxeA-like_sf"/>
</dbReference>
<dbReference type="NCBIfam" id="TIGR01655">
    <property type="entry name" value="yxeA_fam"/>
    <property type="match status" value="1"/>
</dbReference>
<dbReference type="PANTHER" id="PTHR36433">
    <property type="entry name" value="HYPOTHETICAL CYTOSOLIC PROTEIN"/>
    <property type="match status" value="1"/>
</dbReference>
<dbReference type="PANTHER" id="PTHR36433:SF2">
    <property type="entry name" value="YXEA FAMILY PROTEIN"/>
    <property type="match status" value="1"/>
</dbReference>
<dbReference type="Pfam" id="PF06486">
    <property type="entry name" value="DUF1093"/>
    <property type="match status" value="1"/>
</dbReference>
<dbReference type="SUPFAM" id="SSF159121">
    <property type="entry name" value="BC4932-like"/>
    <property type="match status" value="1"/>
</dbReference>
<name>YXEA_BACSU</name>
<keyword id="KW-0002">3D-structure</keyword>
<keyword id="KW-1185">Reference proteome</keyword>
<keyword id="KW-0732">Signal</keyword>
<feature type="signal peptide" evidence="1">
    <location>
        <begin position="1"/>
        <end position="29"/>
    </location>
</feature>
<feature type="chain" id="PRO_0000013742" description="Uncharacterized protein YxeA">
    <location>
        <begin position="30"/>
        <end position="115"/>
    </location>
</feature>
<feature type="strand" evidence="4">
    <location>
        <begin position="30"/>
        <end position="32"/>
    </location>
</feature>
<feature type="strand" evidence="4">
    <location>
        <begin position="37"/>
        <end position="43"/>
    </location>
</feature>
<feature type="strand" evidence="4">
    <location>
        <begin position="49"/>
        <end position="51"/>
    </location>
</feature>
<feature type="turn" evidence="4">
    <location>
        <begin position="52"/>
        <end position="54"/>
    </location>
</feature>
<feature type="strand" evidence="4">
    <location>
        <begin position="55"/>
        <end position="63"/>
    </location>
</feature>
<feature type="strand" evidence="4">
    <location>
        <begin position="69"/>
        <end position="78"/>
    </location>
</feature>
<feature type="strand" evidence="4">
    <location>
        <begin position="85"/>
        <end position="91"/>
    </location>
</feature>
<feature type="strand" evidence="4">
    <location>
        <begin position="94"/>
        <end position="101"/>
    </location>
</feature>
<feature type="helix" evidence="4">
    <location>
        <begin position="103"/>
        <end position="105"/>
    </location>
</feature>
<feature type="helix" evidence="4">
    <location>
        <begin position="108"/>
        <end position="114"/>
    </location>
</feature>
<organism>
    <name type="scientific">Bacillus subtilis (strain 168)</name>
    <dbReference type="NCBI Taxonomy" id="224308"/>
    <lineage>
        <taxon>Bacteria</taxon>
        <taxon>Bacillati</taxon>
        <taxon>Bacillota</taxon>
        <taxon>Bacilli</taxon>
        <taxon>Bacillales</taxon>
        <taxon>Bacillaceae</taxon>
        <taxon>Bacillus</taxon>
    </lineage>
</organism>
<proteinExistence type="evidence at protein level"/>
<evidence type="ECO:0000255" key="1"/>
<evidence type="ECO:0000269" key="2">
    <source>
    </source>
</evidence>
<evidence type="ECO:0000269" key="3">
    <source>
    </source>
</evidence>
<evidence type="ECO:0007829" key="4">
    <source>
        <dbReference type="PDB" id="3NPP"/>
    </source>
</evidence>
<reference key="1">
    <citation type="journal article" date="1995" name="DNA Res.">
        <title>Cloning and sequencing of a 23-kb region of the Bacillus subtilis genome between the iol and hut operons.</title>
        <authorList>
            <person name="Yoshida K."/>
            <person name="Fujimyra M."/>
            <person name="Yanai N."/>
            <person name="Fujita Y."/>
        </authorList>
    </citation>
    <scope>NUCLEOTIDE SEQUENCE [GENOMIC DNA]</scope>
    <source>
        <strain>168 / BGSC1A1</strain>
    </source>
</reference>
<reference key="2">
    <citation type="journal article" date="1997" name="Nature">
        <title>The complete genome sequence of the Gram-positive bacterium Bacillus subtilis.</title>
        <authorList>
            <person name="Kunst F."/>
            <person name="Ogasawara N."/>
            <person name="Moszer I."/>
            <person name="Albertini A.M."/>
            <person name="Alloni G."/>
            <person name="Azevedo V."/>
            <person name="Bertero M.G."/>
            <person name="Bessieres P."/>
            <person name="Bolotin A."/>
            <person name="Borchert S."/>
            <person name="Borriss R."/>
            <person name="Boursier L."/>
            <person name="Brans A."/>
            <person name="Braun M."/>
            <person name="Brignell S.C."/>
            <person name="Bron S."/>
            <person name="Brouillet S."/>
            <person name="Bruschi C.V."/>
            <person name="Caldwell B."/>
            <person name="Capuano V."/>
            <person name="Carter N.M."/>
            <person name="Choi S.-K."/>
            <person name="Codani J.-J."/>
            <person name="Connerton I.F."/>
            <person name="Cummings N.J."/>
            <person name="Daniel R.A."/>
            <person name="Denizot F."/>
            <person name="Devine K.M."/>
            <person name="Duesterhoeft A."/>
            <person name="Ehrlich S.D."/>
            <person name="Emmerson P.T."/>
            <person name="Entian K.-D."/>
            <person name="Errington J."/>
            <person name="Fabret C."/>
            <person name="Ferrari E."/>
            <person name="Foulger D."/>
            <person name="Fritz C."/>
            <person name="Fujita M."/>
            <person name="Fujita Y."/>
            <person name="Fuma S."/>
            <person name="Galizzi A."/>
            <person name="Galleron N."/>
            <person name="Ghim S.-Y."/>
            <person name="Glaser P."/>
            <person name="Goffeau A."/>
            <person name="Golightly E.J."/>
            <person name="Grandi G."/>
            <person name="Guiseppi G."/>
            <person name="Guy B.J."/>
            <person name="Haga K."/>
            <person name="Haiech J."/>
            <person name="Harwood C.R."/>
            <person name="Henaut A."/>
            <person name="Hilbert H."/>
            <person name="Holsappel S."/>
            <person name="Hosono S."/>
            <person name="Hullo M.-F."/>
            <person name="Itaya M."/>
            <person name="Jones L.-M."/>
            <person name="Joris B."/>
            <person name="Karamata D."/>
            <person name="Kasahara Y."/>
            <person name="Klaerr-Blanchard M."/>
            <person name="Klein C."/>
            <person name="Kobayashi Y."/>
            <person name="Koetter P."/>
            <person name="Koningstein G."/>
            <person name="Krogh S."/>
            <person name="Kumano M."/>
            <person name="Kurita K."/>
            <person name="Lapidus A."/>
            <person name="Lardinois S."/>
            <person name="Lauber J."/>
            <person name="Lazarevic V."/>
            <person name="Lee S.-M."/>
            <person name="Levine A."/>
            <person name="Liu H."/>
            <person name="Masuda S."/>
            <person name="Mauel C."/>
            <person name="Medigue C."/>
            <person name="Medina N."/>
            <person name="Mellado R.P."/>
            <person name="Mizuno M."/>
            <person name="Moestl D."/>
            <person name="Nakai S."/>
            <person name="Noback M."/>
            <person name="Noone D."/>
            <person name="O'Reilly M."/>
            <person name="Ogawa K."/>
            <person name="Ogiwara A."/>
            <person name="Oudega B."/>
            <person name="Park S.-H."/>
            <person name="Parro V."/>
            <person name="Pohl T.M."/>
            <person name="Portetelle D."/>
            <person name="Porwollik S."/>
            <person name="Prescott A.M."/>
            <person name="Presecan E."/>
            <person name="Pujic P."/>
            <person name="Purnelle B."/>
            <person name="Rapoport G."/>
            <person name="Rey M."/>
            <person name="Reynolds S."/>
            <person name="Rieger M."/>
            <person name="Rivolta C."/>
            <person name="Rocha E."/>
            <person name="Roche B."/>
            <person name="Rose M."/>
            <person name="Sadaie Y."/>
            <person name="Sato T."/>
            <person name="Scanlan E."/>
            <person name="Schleich S."/>
            <person name="Schroeter R."/>
            <person name="Scoffone F."/>
            <person name="Sekiguchi J."/>
            <person name="Sekowska A."/>
            <person name="Seror S.J."/>
            <person name="Serror P."/>
            <person name="Shin B.-S."/>
            <person name="Soldo B."/>
            <person name="Sorokin A."/>
            <person name="Tacconi E."/>
            <person name="Takagi T."/>
            <person name="Takahashi H."/>
            <person name="Takemaru K."/>
            <person name="Takeuchi M."/>
            <person name="Tamakoshi A."/>
            <person name="Tanaka T."/>
            <person name="Terpstra P."/>
            <person name="Tognoni A."/>
            <person name="Tosato V."/>
            <person name="Uchiyama S."/>
            <person name="Vandenbol M."/>
            <person name="Vannier F."/>
            <person name="Vassarotti A."/>
            <person name="Viari A."/>
            <person name="Wambutt R."/>
            <person name="Wedler E."/>
            <person name="Wedler H."/>
            <person name="Weitzenegger T."/>
            <person name="Winters P."/>
            <person name="Wipat A."/>
            <person name="Yamamoto H."/>
            <person name="Yamane K."/>
            <person name="Yasumoto K."/>
            <person name="Yata K."/>
            <person name="Yoshida K."/>
            <person name="Yoshikawa H.-F."/>
            <person name="Zumstein E."/>
            <person name="Yoshikawa H."/>
            <person name="Danchin A."/>
        </authorList>
    </citation>
    <scope>NUCLEOTIDE SEQUENCE [LARGE SCALE GENOMIC DNA]</scope>
    <source>
        <strain>168</strain>
    </source>
</reference>
<reference key="3">
    <citation type="journal article" date="2004" name="Microbiology">
        <title>Characterization of the Bacillus subtilis YxdJ response regulator as the inducer of expression for the cognate ABC transporter YxdLM.</title>
        <authorList>
            <person name="Joseph P."/>
            <person name="Guiseppi A."/>
            <person name="Sorokin A."/>
            <person name="Denizot F."/>
        </authorList>
    </citation>
    <scope>INDUCTION</scope>
    <source>
        <strain>168</strain>
    </source>
</reference>
<reference key="4">
    <citation type="journal article" date="2005" name="Microbiology">
        <title>Cationic antimicrobial peptides elicit a complex stress response in Bacillus subtilis that involves ECF-type sigma factors and two-component signal transduction systems.</title>
        <authorList>
            <person name="Pietiaeinen M."/>
            <person name="Gardemeister M."/>
            <person name="Mecklin M."/>
            <person name="Leskelae S."/>
            <person name="Sarvas M."/>
            <person name="Kontinen V.P."/>
        </authorList>
    </citation>
    <scope>INDUCTION BY LL-37</scope>
    <source>
        <strain>168</strain>
    </source>
</reference>
<accession>P54940</accession>
<sequence>MKKAMAILAVLAAAAVICGLLFFHNDVTDRFNPFIHQQDVYVQIDRDGRHLSPGGTEYTLDGYNASGKKEEVTFFAGKELRKNAYLKVKAKGKYVETWEEVKFEDMPDSVQSKLK</sequence>
<protein>
    <recommendedName>
        <fullName>Uncharacterized protein YxeA</fullName>
    </recommendedName>
</protein>